<feature type="chain" id="PRO_0000050461" description="Sugar transporter STL1">
    <location>
        <begin position="1"/>
        <end position="569"/>
    </location>
</feature>
<feature type="topological domain" description="Cytoplasmic" evidence="1">
    <location>
        <begin position="1"/>
        <end position="29"/>
    </location>
</feature>
<feature type="transmembrane region" description="Helical; Name=1" evidence="1">
    <location>
        <begin position="30"/>
        <end position="50"/>
    </location>
</feature>
<feature type="topological domain" description="Extracellular" evidence="1">
    <location>
        <begin position="51"/>
        <end position="79"/>
    </location>
</feature>
<feature type="transmembrane region" description="Helical; Name=2" evidence="1">
    <location>
        <begin position="80"/>
        <end position="100"/>
    </location>
</feature>
<feature type="topological domain" description="Cytoplasmic" evidence="1">
    <location>
        <begin position="101"/>
        <end position="107"/>
    </location>
</feature>
<feature type="transmembrane region" description="Helical; Name=3" evidence="1">
    <location>
        <begin position="108"/>
        <end position="128"/>
    </location>
</feature>
<feature type="topological domain" description="Extracellular" evidence="1">
    <location>
        <position position="129"/>
    </location>
</feature>
<feature type="transmembrane region" description="Helical; Name=4" evidence="1">
    <location>
        <begin position="130"/>
        <end position="150"/>
    </location>
</feature>
<feature type="topological domain" description="Cytoplasmic" evidence="1">
    <location>
        <begin position="151"/>
        <end position="168"/>
    </location>
</feature>
<feature type="transmembrane region" description="Helical; Name=5" evidence="1">
    <location>
        <begin position="169"/>
        <end position="189"/>
    </location>
</feature>
<feature type="topological domain" description="Extracellular" evidence="1">
    <location>
        <begin position="190"/>
        <end position="203"/>
    </location>
</feature>
<feature type="transmembrane region" description="Helical; Name=6" evidence="1">
    <location>
        <begin position="204"/>
        <end position="224"/>
    </location>
</feature>
<feature type="topological domain" description="Cytoplasmic" evidence="1">
    <location>
        <begin position="225"/>
        <end position="291"/>
    </location>
</feature>
<feature type="transmembrane region" description="Helical; Name=7" evidence="1">
    <location>
        <begin position="292"/>
        <end position="312"/>
    </location>
</feature>
<feature type="topological domain" description="Extracellular" evidence="1">
    <location>
        <begin position="313"/>
        <end position="330"/>
    </location>
</feature>
<feature type="transmembrane region" description="Helical; Name=8" evidence="1">
    <location>
        <begin position="331"/>
        <end position="351"/>
    </location>
</feature>
<feature type="topological domain" description="Cytoplasmic" evidence="1">
    <location>
        <begin position="352"/>
        <end position="358"/>
    </location>
</feature>
<feature type="transmembrane region" description="Helical; Name=9" evidence="1">
    <location>
        <begin position="359"/>
        <end position="379"/>
    </location>
</feature>
<feature type="topological domain" description="Extracellular" evidence="1">
    <location>
        <begin position="380"/>
        <end position="389"/>
    </location>
</feature>
<feature type="transmembrane region" description="Helical; Name=10" evidence="1">
    <location>
        <begin position="390"/>
        <end position="410"/>
    </location>
</feature>
<feature type="topological domain" description="Cytoplasmic" evidence="1">
    <location>
        <begin position="411"/>
        <end position="426"/>
    </location>
</feature>
<feature type="transmembrane region" description="Helical; Name=11" evidence="1">
    <location>
        <begin position="427"/>
        <end position="447"/>
    </location>
</feature>
<feature type="topological domain" description="Extracellular" evidence="1">
    <location>
        <begin position="448"/>
        <end position="453"/>
    </location>
</feature>
<feature type="transmembrane region" description="Helical; Name=12" evidence="1">
    <location>
        <begin position="454"/>
        <end position="474"/>
    </location>
</feature>
<feature type="topological domain" description="Cytoplasmic" evidence="1">
    <location>
        <begin position="475"/>
        <end position="569"/>
    </location>
</feature>
<feature type="region of interest" description="Disordered" evidence="2">
    <location>
        <begin position="524"/>
        <end position="569"/>
    </location>
</feature>
<feature type="compositionally biased region" description="Acidic residues" evidence="2">
    <location>
        <begin position="524"/>
        <end position="533"/>
    </location>
</feature>
<feature type="compositionally biased region" description="Basic and acidic residues" evidence="2">
    <location>
        <begin position="556"/>
        <end position="569"/>
    </location>
</feature>
<feature type="glycosylation site" description="N-linked (GlcNAc...) asparagine" evidence="1">
    <location>
        <position position="197"/>
    </location>
</feature>
<feature type="glycosylation site" description="N-linked (GlcNAc...) asparagine" evidence="1">
    <location>
        <position position="319"/>
    </location>
</feature>
<feature type="sequence conflict" description="In Ref. 4; AAU09713." evidence="3" ref="4">
    <original>E</original>
    <variation>G</variation>
    <location>
        <position position="237"/>
    </location>
</feature>
<accession>P39932</accession>
<accession>D6VTF6</accession>
<accession>E9P950</accession>
<dbReference type="EMBL" id="L07492">
    <property type="protein sequence ID" value="AAA57229.1"/>
    <property type="status" value="ALT_FRAME"/>
    <property type="molecule type" value="Genomic_DNA"/>
</dbReference>
<dbReference type="EMBL" id="U33057">
    <property type="protein sequence ID" value="AAB64975.1"/>
    <property type="molecule type" value="Genomic_DNA"/>
</dbReference>
<dbReference type="EMBL" id="AY723796">
    <property type="protein sequence ID" value="AAU09713.1"/>
    <property type="molecule type" value="Genomic_DNA"/>
</dbReference>
<dbReference type="EMBL" id="BK006938">
    <property type="protein sequence ID" value="DAA12366.1"/>
    <property type="molecule type" value="Genomic_DNA"/>
</dbReference>
<dbReference type="PIR" id="S69591">
    <property type="entry name" value="S69591"/>
</dbReference>
<dbReference type="RefSeq" id="NP_010825.3">
    <property type="nucleotide sequence ID" value="NM_001180844.3"/>
</dbReference>
<dbReference type="SMR" id="P39932"/>
<dbReference type="BioGRID" id="32584">
    <property type="interactions" value="120"/>
</dbReference>
<dbReference type="DIP" id="DIP-5275N"/>
<dbReference type="FunCoup" id="P39932">
    <property type="interactions" value="99"/>
</dbReference>
<dbReference type="IntAct" id="P39932">
    <property type="interactions" value="2"/>
</dbReference>
<dbReference type="STRING" id="4932.YDR536W"/>
<dbReference type="TCDB" id="2.A.1.1.38">
    <property type="family name" value="the major facilitator superfamily (mfs)"/>
</dbReference>
<dbReference type="GlyCosmos" id="P39932">
    <property type="glycosylation" value="2 sites, No reported glycans"/>
</dbReference>
<dbReference type="GlyGen" id="P39932">
    <property type="glycosylation" value="2 sites"/>
</dbReference>
<dbReference type="PaxDb" id="4932-YDR536W"/>
<dbReference type="PeptideAtlas" id="P39932"/>
<dbReference type="EnsemblFungi" id="YDR536W_mRNA">
    <property type="protein sequence ID" value="YDR536W"/>
    <property type="gene ID" value="YDR536W"/>
</dbReference>
<dbReference type="GeneID" id="852149"/>
<dbReference type="KEGG" id="sce:YDR536W"/>
<dbReference type="AGR" id="SGD:S000002944"/>
<dbReference type="SGD" id="S000002944">
    <property type="gene designation" value="STL1"/>
</dbReference>
<dbReference type="VEuPathDB" id="FungiDB:YDR536W"/>
<dbReference type="eggNOG" id="KOG0254">
    <property type="taxonomic scope" value="Eukaryota"/>
</dbReference>
<dbReference type="HOGENOM" id="CLU_001265_30_3_1"/>
<dbReference type="InParanoid" id="P39932"/>
<dbReference type="OMA" id="TQHFQRM"/>
<dbReference type="OrthoDB" id="6133115at2759"/>
<dbReference type="BioCyc" id="YEAST:G3O-30046-MONOMER"/>
<dbReference type="BioGRID-ORCS" id="852149">
    <property type="hits" value="7 hits in 10 CRISPR screens"/>
</dbReference>
<dbReference type="PRO" id="PR:P39932"/>
<dbReference type="Proteomes" id="UP000002311">
    <property type="component" value="Chromosome IV"/>
</dbReference>
<dbReference type="RNAct" id="P39932">
    <property type="molecule type" value="protein"/>
</dbReference>
<dbReference type="GO" id="GO:0071944">
    <property type="term" value="C:cell periphery"/>
    <property type="evidence" value="ECO:0007005"/>
    <property type="project" value="SGD"/>
</dbReference>
<dbReference type="GO" id="GO:0000324">
    <property type="term" value="C:fungal-type vacuole"/>
    <property type="evidence" value="ECO:0007005"/>
    <property type="project" value="SGD"/>
</dbReference>
<dbReference type="GO" id="GO:0016020">
    <property type="term" value="C:membrane"/>
    <property type="evidence" value="ECO:0000318"/>
    <property type="project" value="GO_Central"/>
</dbReference>
<dbReference type="GO" id="GO:0005886">
    <property type="term" value="C:plasma membrane"/>
    <property type="evidence" value="ECO:0000314"/>
    <property type="project" value="SGD"/>
</dbReference>
<dbReference type="GO" id="GO:0005351">
    <property type="term" value="F:carbohydrate:proton symporter activity"/>
    <property type="evidence" value="ECO:0000318"/>
    <property type="project" value="GO_Central"/>
</dbReference>
<dbReference type="GO" id="GO:0015295">
    <property type="term" value="F:solute:proton symporter activity"/>
    <property type="evidence" value="ECO:0000314"/>
    <property type="project" value="SGD"/>
</dbReference>
<dbReference type="GO" id="GO:0015793">
    <property type="term" value="P:glycerol transmembrane transport"/>
    <property type="evidence" value="ECO:0000315"/>
    <property type="project" value="SGD"/>
</dbReference>
<dbReference type="GO" id="GO:0055085">
    <property type="term" value="P:transmembrane transport"/>
    <property type="evidence" value="ECO:0000315"/>
    <property type="project" value="SGD"/>
</dbReference>
<dbReference type="CDD" id="cd17356">
    <property type="entry name" value="MFS_HXT"/>
    <property type="match status" value="1"/>
</dbReference>
<dbReference type="FunFam" id="1.20.1250.20:FF:000061">
    <property type="entry name" value="MFS sugar transporter"/>
    <property type="match status" value="1"/>
</dbReference>
<dbReference type="Gene3D" id="1.20.1250.20">
    <property type="entry name" value="MFS general substrate transporter like domains"/>
    <property type="match status" value="1"/>
</dbReference>
<dbReference type="InterPro" id="IPR020846">
    <property type="entry name" value="MFS_dom"/>
</dbReference>
<dbReference type="InterPro" id="IPR005828">
    <property type="entry name" value="MFS_sugar_transport-like"/>
</dbReference>
<dbReference type="InterPro" id="IPR050360">
    <property type="entry name" value="MFS_Sugar_Transporters"/>
</dbReference>
<dbReference type="InterPro" id="IPR036259">
    <property type="entry name" value="MFS_trans_sf"/>
</dbReference>
<dbReference type="InterPro" id="IPR003663">
    <property type="entry name" value="Sugar/inositol_transpt"/>
</dbReference>
<dbReference type="InterPro" id="IPR005829">
    <property type="entry name" value="Sugar_transporter_CS"/>
</dbReference>
<dbReference type="NCBIfam" id="TIGR00879">
    <property type="entry name" value="SP"/>
    <property type="match status" value="1"/>
</dbReference>
<dbReference type="PANTHER" id="PTHR48022">
    <property type="entry name" value="PLASTIDIC GLUCOSE TRANSPORTER 4"/>
    <property type="match status" value="1"/>
</dbReference>
<dbReference type="PANTHER" id="PTHR48022:SF55">
    <property type="entry name" value="SUGAR TRANSPORTER STL1"/>
    <property type="match status" value="1"/>
</dbReference>
<dbReference type="Pfam" id="PF00083">
    <property type="entry name" value="Sugar_tr"/>
    <property type="match status" value="1"/>
</dbReference>
<dbReference type="PRINTS" id="PR00171">
    <property type="entry name" value="SUGRTRNSPORT"/>
</dbReference>
<dbReference type="SUPFAM" id="SSF103473">
    <property type="entry name" value="MFS general substrate transporter"/>
    <property type="match status" value="1"/>
</dbReference>
<dbReference type="PROSITE" id="PS50850">
    <property type="entry name" value="MFS"/>
    <property type="match status" value="1"/>
</dbReference>
<dbReference type="PROSITE" id="PS00216">
    <property type="entry name" value="SUGAR_TRANSPORT_1"/>
    <property type="match status" value="1"/>
</dbReference>
<evidence type="ECO:0000255" key="1"/>
<evidence type="ECO:0000256" key="2">
    <source>
        <dbReference type="SAM" id="MobiDB-lite"/>
    </source>
</evidence>
<evidence type="ECO:0000305" key="3"/>
<gene>
    <name type="primary">STL1</name>
    <name type="ordered locus">YDR536W</name>
    <name type="ORF">D9719.39</name>
</gene>
<protein>
    <recommendedName>
        <fullName>Sugar transporter STL1</fullName>
    </recommendedName>
</protein>
<sequence length="569" mass="63532">MKDLKLSNFKGKFISRTSHWGLTGKKLRYFITIASMTGFSLFGYDQGLMASLITGKQFNYEFPATKENGDHDRHATVVQGATTSCYELGCFAGSLFVMFCGERIGRKPLILMGSVITIIGAVISTCAFRGYWALGQFIIGRVVTGVGTGLNTSTIPVWQSEMSKAENRGLLVNLEGSTIAFGTMIAYWIDFGLSYTNSSVQWRFPVSMQIVFALFLLAFMIKLPESPRWLISQSRTEEARYLVGTLDDADPNDEEVITEVAMLHDAVNRTKHEKHSLSSLFSRGRSQNLQRALIAASTQFFQQFTGCNAAIYYSTVLFNKTIKLDYRLSMIIGGVFATIYALSTIGSFFLIEKLGRRKLFLLGATGQAVSFTITFACLVKENKENARGAAVGLFLFITFFGLSLLSLPWIYPPEIASMKVRASTNAFSTCTNWLCNFAVVMFTPIFIGQSGWGCYLFFAVMNYLYIPVIFFFYPETAGRSLEEIDIIFAKAYEDGTQPWRVANHLPKLSLQEVEDHANALGSYDDEMEKEDFGEDRVEDTYNQINGDNSSSSSNIKNEDTVNDKANFEG</sequence>
<organism>
    <name type="scientific">Saccharomyces cerevisiae (strain ATCC 204508 / S288c)</name>
    <name type="common">Baker's yeast</name>
    <dbReference type="NCBI Taxonomy" id="559292"/>
    <lineage>
        <taxon>Eukaryota</taxon>
        <taxon>Fungi</taxon>
        <taxon>Dikarya</taxon>
        <taxon>Ascomycota</taxon>
        <taxon>Saccharomycotina</taxon>
        <taxon>Saccharomycetes</taxon>
        <taxon>Saccharomycetales</taxon>
        <taxon>Saccharomycetaceae</taxon>
        <taxon>Saccharomyces</taxon>
    </lineage>
</organism>
<comment type="subcellular location">
    <subcellularLocation>
        <location>Membrane</location>
        <topology>Multi-pass membrane protein</topology>
    </subcellularLocation>
</comment>
<comment type="similarity">
    <text evidence="3">Belongs to the major facilitator superfamily. Sugar transporter (TC 2.A.1.1) family.</text>
</comment>
<comment type="sequence caution" evidence="3">
    <conflict type="frameshift">
        <sequence resource="EMBL-CDS" id="AAA57229"/>
    </conflict>
</comment>
<name>STL1_YEAST</name>
<keyword id="KW-0325">Glycoprotein</keyword>
<keyword id="KW-0472">Membrane</keyword>
<keyword id="KW-1185">Reference proteome</keyword>
<keyword id="KW-0677">Repeat</keyword>
<keyword id="KW-0762">Sugar transport</keyword>
<keyword id="KW-0812">Transmembrane</keyword>
<keyword id="KW-1133">Transmembrane helix</keyword>
<keyword id="KW-0813">Transport</keyword>
<reference key="1">
    <citation type="journal article" date="1994" name="Gene">
        <title>The STL1 gene of Saccharomyces cerevisiae is predicted to encode a sugar transporter-like protein.</title>
        <authorList>
            <person name="Zhao S."/>
            <person name="Douglas N.W."/>
            <person name="Heine M.J."/>
            <person name="Williams G.M."/>
            <person name="Winther-Larsen H.C."/>
            <person name="Meaden P.G."/>
        </authorList>
    </citation>
    <scope>NUCLEOTIDE SEQUENCE [GENOMIC DNA]</scope>
</reference>
<reference key="2">
    <citation type="journal article" date="1997" name="Nature">
        <title>The nucleotide sequence of Saccharomyces cerevisiae chromosome IV.</title>
        <authorList>
            <person name="Jacq C."/>
            <person name="Alt-Moerbe J."/>
            <person name="Andre B."/>
            <person name="Arnold W."/>
            <person name="Bahr A."/>
            <person name="Ballesta J.P.G."/>
            <person name="Bargues M."/>
            <person name="Baron L."/>
            <person name="Becker A."/>
            <person name="Biteau N."/>
            <person name="Bloecker H."/>
            <person name="Blugeon C."/>
            <person name="Boskovic J."/>
            <person name="Brandt P."/>
            <person name="Brueckner M."/>
            <person name="Buitrago M.J."/>
            <person name="Coster F."/>
            <person name="Delaveau T."/>
            <person name="del Rey F."/>
            <person name="Dujon B."/>
            <person name="Eide L.G."/>
            <person name="Garcia-Cantalejo J.M."/>
            <person name="Goffeau A."/>
            <person name="Gomez-Peris A."/>
            <person name="Granotier C."/>
            <person name="Hanemann V."/>
            <person name="Hankeln T."/>
            <person name="Hoheisel J.D."/>
            <person name="Jaeger W."/>
            <person name="Jimenez A."/>
            <person name="Jonniaux J.-L."/>
            <person name="Kraemer C."/>
            <person name="Kuester H."/>
            <person name="Laamanen P."/>
            <person name="Legros Y."/>
            <person name="Louis E.J."/>
            <person name="Moeller-Rieker S."/>
            <person name="Monnet A."/>
            <person name="Moro M."/>
            <person name="Mueller-Auer S."/>
            <person name="Nussbaumer B."/>
            <person name="Paricio N."/>
            <person name="Paulin L."/>
            <person name="Perea J."/>
            <person name="Perez-Alonso M."/>
            <person name="Perez-Ortin J.E."/>
            <person name="Pohl T.M."/>
            <person name="Prydz H."/>
            <person name="Purnelle B."/>
            <person name="Rasmussen S.W."/>
            <person name="Remacha M.A."/>
            <person name="Revuelta J.L."/>
            <person name="Rieger M."/>
            <person name="Salom D."/>
            <person name="Saluz H.P."/>
            <person name="Saiz J.E."/>
            <person name="Saren A.-M."/>
            <person name="Schaefer M."/>
            <person name="Scharfe M."/>
            <person name="Schmidt E.R."/>
            <person name="Schneider C."/>
            <person name="Scholler P."/>
            <person name="Schwarz S."/>
            <person name="Soler-Mira A."/>
            <person name="Urrestarazu L.A."/>
            <person name="Verhasselt P."/>
            <person name="Vissers S."/>
            <person name="Voet M."/>
            <person name="Volckaert G."/>
            <person name="Wagner G."/>
            <person name="Wambutt R."/>
            <person name="Wedler E."/>
            <person name="Wedler H."/>
            <person name="Woelfl S."/>
            <person name="Harris D.E."/>
            <person name="Bowman S."/>
            <person name="Brown D."/>
            <person name="Churcher C.M."/>
            <person name="Connor R."/>
            <person name="Dedman K."/>
            <person name="Gentles S."/>
            <person name="Hamlin N."/>
            <person name="Hunt S."/>
            <person name="Jones L."/>
            <person name="McDonald S."/>
            <person name="Murphy L.D."/>
            <person name="Niblett D."/>
            <person name="Odell C."/>
            <person name="Oliver K."/>
            <person name="Rajandream M.A."/>
            <person name="Richards C."/>
            <person name="Shore L."/>
            <person name="Walsh S.V."/>
            <person name="Barrell B.G."/>
            <person name="Dietrich F.S."/>
            <person name="Mulligan J.T."/>
            <person name="Allen E."/>
            <person name="Araujo R."/>
            <person name="Aviles E."/>
            <person name="Berno A."/>
            <person name="Carpenter J."/>
            <person name="Chen E."/>
            <person name="Cherry J.M."/>
            <person name="Chung E."/>
            <person name="Duncan M."/>
            <person name="Hunicke-Smith S."/>
            <person name="Hyman R.W."/>
            <person name="Komp C."/>
            <person name="Lashkari D."/>
            <person name="Lew H."/>
            <person name="Lin D."/>
            <person name="Mosedale D."/>
            <person name="Nakahara K."/>
            <person name="Namath A."/>
            <person name="Oefner P."/>
            <person name="Oh C."/>
            <person name="Petel F.X."/>
            <person name="Roberts D."/>
            <person name="Schramm S."/>
            <person name="Schroeder M."/>
            <person name="Shogren T."/>
            <person name="Shroff N."/>
            <person name="Winant A."/>
            <person name="Yelton M.A."/>
            <person name="Botstein D."/>
            <person name="Davis R.W."/>
            <person name="Johnston M."/>
            <person name="Andrews S."/>
            <person name="Brinkman R."/>
            <person name="Cooper J."/>
            <person name="Ding H."/>
            <person name="Du Z."/>
            <person name="Favello A."/>
            <person name="Fulton L."/>
            <person name="Gattung S."/>
            <person name="Greco T."/>
            <person name="Hallsworth K."/>
            <person name="Hawkins J."/>
            <person name="Hillier L.W."/>
            <person name="Jier M."/>
            <person name="Johnson D."/>
            <person name="Johnston L."/>
            <person name="Kirsten J."/>
            <person name="Kucaba T."/>
            <person name="Langston Y."/>
            <person name="Latreille P."/>
            <person name="Le T."/>
            <person name="Mardis E."/>
            <person name="Menezes S."/>
            <person name="Miller N."/>
            <person name="Nhan M."/>
            <person name="Pauley A."/>
            <person name="Peluso D."/>
            <person name="Rifkin L."/>
            <person name="Riles L."/>
            <person name="Taich A."/>
            <person name="Trevaskis E."/>
            <person name="Vignati D."/>
            <person name="Wilcox L."/>
            <person name="Wohldman P."/>
            <person name="Vaudin M."/>
            <person name="Wilson R."/>
            <person name="Waterston R."/>
            <person name="Albermann K."/>
            <person name="Hani J."/>
            <person name="Heumann K."/>
            <person name="Kleine K."/>
            <person name="Mewes H.-W."/>
            <person name="Zollner A."/>
            <person name="Zaccaria P."/>
        </authorList>
    </citation>
    <scope>NUCLEOTIDE SEQUENCE [LARGE SCALE GENOMIC DNA]</scope>
    <source>
        <strain>ATCC 204508 / S288c</strain>
    </source>
</reference>
<reference key="3">
    <citation type="journal article" date="2014" name="G3 (Bethesda)">
        <title>The reference genome sequence of Saccharomyces cerevisiae: Then and now.</title>
        <authorList>
            <person name="Engel S.R."/>
            <person name="Dietrich F.S."/>
            <person name="Fisk D.G."/>
            <person name="Binkley G."/>
            <person name="Balakrishnan R."/>
            <person name="Costanzo M.C."/>
            <person name="Dwight S.S."/>
            <person name="Hitz B.C."/>
            <person name="Karra K."/>
            <person name="Nash R.S."/>
            <person name="Weng S."/>
            <person name="Wong E.D."/>
            <person name="Lloyd P."/>
            <person name="Skrzypek M.S."/>
            <person name="Miyasato S.R."/>
            <person name="Simison M."/>
            <person name="Cherry J.M."/>
        </authorList>
    </citation>
    <scope>GENOME REANNOTATION</scope>
    <source>
        <strain>ATCC 204508 / S288c</strain>
    </source>
</reference>
<reference key="4">
    <citation type="journal article" date="2007" name="Genome Res.">
        <title>Approaching a complete repository of sequence-verified protein-encoding clones for Saccharomyces cerevisiae.</title>
        <authorList>
            <person name="Hu Y."/>
            <person name="Rolfs A."/>
            <person name="Bhullar B."/>
            <person name="Murthy T.V.S."/>
            <person name="Zhu C."/>
            <person name="Berger M.F."/>
            <person name="Camargo A.A."/>
            <person name="Kelley F."/>
            <person name="McCarron S."/>
            <person name="Jepson D."/>
            <person name="Richardson A."/>
            <person name="Raphael J."/>
            <person name="Moreira D."/>
            <person name="Taycher E."/>
            <person name="Zuo D."/>
            <person name="Mohr S."/>
            <person name="Kane M.F."/>
            <person name="Williamson J."/>
            <person name="Simpson A.J.G."/>
            <person name="Bulyk M.L."/>
            <person name="Harlow E."/>
            <person name="Marsischky G."/>
            <person name="Kolodner R.D."/>
            <person name="LaBaer J."/>
        </authorList>
    </citation>
    <scope>NUCLEOTIDE SEQUENCE [GENOMIC DNA]</scope>
    <source>
        <strain>ATCC 204508 / S288c</strain>
    </source>
</reference>
<reference key="5">
    <citation type="journal article" date="2006" name="Proc. Natl. Acad. Sci. U.S.A.">
        <title>A global topology map of the Saccharomyces cerevisiae membrane proteome.</title>
        <authorList>
            <person name="Kim H."/>
            <person name="Melen K."/>
            <person name="Oesterberg M."/>
            <person name="von Heijne G."/>
        </authorList>
    </citation>
    <scope>TOPOLOGY [LARGE SCALE ANALYSIS]</scope>
    <source>
        <strain>ATCC 208353 / W303-1A</strain>
    </source>
</reference>
<proteinExistence type="evidence at protein level"/>